<dbReference type="EMBL" id="CP001078">
    <property type="protein sequence ID" value="ACD50997.1"/>
    <property type="molecule type" value="Genomic_DNA"/>
</dbReference>
<dbReference type="RefSeq" id="WP_003374074.1">
    <property type="nucleotide sequence ID" value="NC_010723.1"/>
</dbReference>
<dbReference type="SMR" id="B2V1Z7"/>
<dbReference type="KEGG" id="cbt:CLH_0776"/>
<dbReference type="HOGENOM" id="CLU_112356_0_2_9"/>
<dbReference type="GO" id="GO:0005737">
    <property type="term" value="C:cytoplasm"/>
    <property type="evidence" value="ECO:0007669"/>
    <property type="project" value="UniProtKB-SubCell"/>
</dbReference>
<dbReference type="GO" id="GO:0044780">
    <property type="term" value="P:bacterial-type flagellum assembly"/>
    <property type="evidence" value="ECO:0007669"/>
    <property type="project" value="UniProtKB-UniRule"/>
</dbReference>
<dbReference type="GO" id="GO:0006417">
    <property type="term" value="P:regulation of translation"/>
    <property type="evidence" value="ECO:0007669"/>
    <property type="project" value="UniProtKB-KW"/>
</dbReference>
<dbReference type="Gene3D" id="2.30.290.10">
    <property type="entry name" value="BH3618-like"/>
    <property type="match status" value="1"/>
</dbReference>
<dbReference type="HAMAP" id="MF_01185">
    <property type="entry name" value="FliW"/>
    <property type="match status" value="1"/>
</dbReference>
<dbReference type="InterPro" id="IPR003775">
    <property type="entry name" value="Flagellar_assembly_factor_FliW"/>
</dbReference>
<dbReference type="InterPro" id="IPR024046">
    <property type="entry name" value="Flagellar_assmbl_FliW_dom_sf"/>
</dbReference>
<dbReference type="NCBIfam" id="NF009793">
    <property type="entry name" value="PRK13285.1-1"/>
    <property type="match status" value="1"/>
</dbReference>
<dbReference type="PANTHER" id="PTHR39190">
    <property type="entry name" value="FLAGELLAR ASSEMBLY FACTOR FLIW"/>
    <property type="match status" value="1"/>
</dbReference>
<dbReference type="PANTHER" id="PTHR39190:SF1">
    <property type="entry name" value="FLAGELLAR ASSEMBLY FACTOR FLIW"/>
    <property type="match status" value="1"/>
</dbReference>
<dbReference type="Pfam" id="PF02623">
    <property type="entry name" value="FliW"/>
    <property type="match status" value="1"/>
</dbReference>
<dbReference type="SUPFAM" id="SSF141457">
    <property type="entry name" value="BH3618-like"/>
    <property type="match status" value="1"/>
</dbReference>
<sequence>MIFVSKVHGNIEYEEKDKITFKKGILGFENLKEYALVDLKECEPFKLLQSLEDDEAGLIVVCPFEFFKEYEIKLSDEDTTRLDVKNQSDVVLLTTVTLDSDPKKITTNLKAPIIINISNNLGEQIILDKSDYKIKHLLIEE</sequence>
<keyword id="KW-1005">Bacterial flagellum biogenesis</keyword>
<keyword id="KW-0143">Chaperone</keyword>
<keyword id="KW-0963">Cytoplasm</keyword>
<keyword id="KW-0810">Translation regulation</keyword>
<gene>
    <name evidence="1" type="primary">fliW</name>
    <name type="ordered locus">CLH_0776</name>
</gene>
<proteinExistence type="inferred from homology"/>
<name>FLIW_CLOBA</name>
<organism>
    <name type="scientific">Clostridium botulinum (strain Alaska E43 / Type E3)</name>
    <dbReference type="NCBI Taxonomy" id="508767"/>
    <lineage>
        <taxon>Bacteria</taxon>
        <taxon>Bacillati</taxon>
        <taxon>Bacillota</taxon>
        <taxon>Clostridia</taxon>
        <taxon>Eubacteriales</taxon>
        <taxon>Clostridiaceae</taxon>
        <taxon>Clostridium</taxon>
    </lineage>
</organism>
<accession>B2V1Z7</accession>
<evidence type="ECO:0000255" key="1">
    <source>
        <dbReference type="HAMAP-Rule" id="MF_01185"/>
    </source>
</evidence>
<feature type="chain" id="PRO_1000138254" description="Flagellar assembly factor FliW">
    <location>
        <begin position="1"/>
        <end position="141"/>
    </location>
</feature>
<protein>
    <recommendedName>
        <fullName evidence="1">Flagellar assembly factor FliW</fullName>
    </recommendedName>
</protein>
<reference key="1">
    <citation type="submission" date="2008-05" db="EMBL/GenBank/DDBJ databases">
        <title>Complete genome sequence of Clostridium botulinum E3 str. Alaska E43.</title>
        <authorList>
            <person name="Brinkac L.M."/>
            <person name="Brown J.L."/>
            <person name="Bruce D."/>
            <person name="Detter C."/>
            <person name="Munk C."/>
            <person name="Smith L.A."/>
            <person name="Smith T.J."/>
            <person name="Sutton G."/>
            <person name="Brettin T.S."/>
        </authorList>
    </citation>
    <scope>NUCLEOTIDE SEQUENCE [LARGE SCALE GENOMIC DNA]</scope>
    <source>
        <strain>Alaska E43 / Type E3</strain>
    </source>
</reference>
<comment type="function">
    <text evidence="1">Acts as an anti-CsrA protein, binds CsrA and prevents it from repressing translation of its target genes, one of which is flagellin. Binds to flagellin and participates in the assembly of the flagellum.</text>
</comment>
<comment type="subunit">
    <text evidence="1">Interacts with translational regulator CsrA and flagellin(s).</text>
</comment>
<comment type="subcellular location">
    <subcellularLocation>
        <location evidence="1">Cytoplasm</location>
    </subcellularLocation>
</comment>
<comment type="similarity">
    <text evidence="1">Belongs to the FliW family.</text>
</comment>